<feature type="chain" id="PRO_0000095876" description="Translation initiation factor IF-1 2">
    <location>
        <begin position="1"/>
        <end position="74"/>
    </location>
</feature>
<feature type="domain" description="S1-like" evidence="1">
    <location>
        <begin position="1"/>
        <end position="73"/>
    </location>
</feature>
<comment type="function">
    <text evidence="1">One of the essential components for the initiation of protein synthesis. Stabilizes the binding of IF-2 and IF-3 on the 30S subunit to which N-formylmethionyl-tRNA(fMet) subsequently binds. Helps modulate mRNA selection, yielding the 30S pre-initiation complex (PIC). Upon addition of the 50S ribosomal subunit IF-1, IF-2 and IF-3 are released leaving the mature 70S translation initiation complex.</text>
</comment>
<comment type="subunit">
    <text evidence="1">Component of the 30S ribosomal translation pre-initiation complex which assembles on the 30S ribosome in the order IF-2 and IF-3, IF-1 and N-formylmethionyl-tRNA(fMet); mRNA recruitment can occur at any time during PIC assembly.</text>
</comment>
<comment type="subcellular location">
    <subcellularLocation>
        <location evidence="1">Cytoplasm</location>
    </subcellularLocation>
</comment>
<comment type="similarity">
    <text evidence="1">Belongs to the IF-1 family.</text>
</comment>
<name>IF12_STRAW</name>
<evidence type="ECO:0000255" key="1">
    <source>
        <dbReference type="HAMAP-Rule" id="MF_00075"/>
    </source>
</evidence>
<proteinExistence type="inferred from homology"/>
<dbReference type="EMBL" id="BA000030">
    <property type="protein sequence ID" value="BAC68214.1"/>
    <property type="molecule type" value="Genomic_DNA"/>
</dbReference>
<dbReference type="SMR" id="Q82QK2"/>
<dbReference type="KEGG" id="sma:SAVERM_504"/>
<dbReference type="eggNOG" id="COG0361">
    <property type="taxonomic scope" value="Bacteria"/>
</dbReference>
<dbReference type="HOGENOM" id="CLU_151267_1_0_11"/>
<dbReference type="OrthoDB" id="9803250at2"/>
<dbReference type="Proteomes" id="UP000000428">
    <property type="component" value="Chromosome"/>
</dbReference>
<dbReference type="GO" id="GO:0005829">
    <property type="term" value="C:cytosol"/>
    <property type="evidence" value="ECO:0007669"/>
    <property type="project" value="TreeGrafter"/>
</dbReference>
<dbReference type="GO" id="GO:0043022">
    <property type="term" value="F:ribosome binding"/>
    <property type="evidence" value="ECO:0007669"/>
    <property type="project" value="UniProtKB-UniRule"/>
</dbReference>
<dbReference type="GO" id="GO:0019843">
    <property type="term" value="F:rRNA binding"/>
    <property type="evidence" value="ECO:0007669"/>
    <property type="project" value="UniProtKB-UniRule"/>
</dbReference>
<dbReference type="GO" id="GO:0003743">
    <property type="term" value="F:translation initiation factor activity"/>
    <property type="evidence" value="ECO:0007669"/>
    <property type="project" value="UniProtKB-UniRule"/>
</dbReference>
<dbReference type="CDD" id="cd04451">
    <property type="entry name" value="S1_IF1"/>
    <property type="match status" value="1"/>
</dbReference>
<dbReference type="FunFam" id="2.40.50.140:FF:000002">
    <property type="entry name" value="Translation initiation factor IF-1"/>
    <property type="match status" value="1"/>
</dbReference>
<dbReference type="Gene3D" id="2.40.50.140">
    <property type="entry name" value="Nucleic acid-binding proteins"/>
    <property type="match status" value="1"/>
</dbReference>
<dbReference type="HAMAP" id="MF_00075">
    <property type="entry name" value="IF_1"/>
    <property type="match status" value="1"/>
</dbReference>
<dbReference type="InterPro" id="IPR012340">
    <property type="entry name" value="NA-bd_OB-fold"/>
</dbReference>
<dbReference type="InterPro" id="IPR006196">
    <property type="entry name" value="RNA-binding_domain_S1_IF1"/>
</dbReference>
<dbReference type="InterPro" id="IPR003029">
    <property type="entry name" value="S1_domain"/>
</dbReference>
<dbReference type="InterPro" id="IPR004368">
    <property type="entry name" value="TIF_IF1"/>
</dbReference>
<dbReference type="NCBIfam" id="TIGR00008">
    <property type="entry name" value="infA"/>
    <property type="match status" value="1"/>
</dbReference>
<dbReference type="PANTHER" id="PTHR33370">
    <property type="entry name" value="TRANSLATION INITIATION FACTOR IF-1, CHLOROPLASTIC"/>
    <property type="match status" value="1"/>
</dbReference>
<dbReference type="PANTHER" id="PTHR33370:SF1">
    <property type="entry name" value="TRANSLATION INITIATION FACTOR IF-1, CHLOROPLASTIC"/>
    <property type="match status" value="1"/>
</dbReference>
<dbReference type="Pfam" id="PF01176">
    <property type="entry name" value="eIF-1a"/>
    <property type="match status" value="1"/>
</dbReference>
<dbReference type="SMART" id="SM00316">
    <property type="entry name" value="S1"/>
    <property type="match status" value="1"/>
</dbReference>
<dbReference type="SUPFAM" id="SSF50249">
    <property type="entry name" value="Nucleic acid-binding proteins"/>
    <property type="match status" value="1"/>
</dbReference>
<dbReference type="PROSITE" id="PS50832">
    <property type="entry name" value="S1_IF1_TYPE"/>
    <property type="match status" value="1"/>
</dbReference>
<organism>
    <name type="scientific">Streptomyces avermitilis (strain ATCC 31267 / DSM 46492 / JCM 5070 / NBRC 14893 / NCIMB 12804 / NRRL 8165 / MA-4680)</name>
    <dbReference type="NCBI Taxonomy" id="227882"/>
    <lineage>
        <taxon>Bacteria</taxon>
        <taxon>Bacillati</taxon>
        <taxon>Actinomycetota</taxon>
        <taxon>Actinomycetes</taxon>
        <taxon>Kitasatosporales</taxon>
        <taxon>Streptomycetaceae</taxon>
        <taxon>Streptomyces</taxon>
    </lineage>
</organism>
<protein>
    <recommendedName>
        <fullName evidence="1">Translation initiation factor IF-1 2</fullName>
    </recommendedName>
</protein>
<sequence>MTKNKNVIEVEGKVVECLRSAMFTVELENGHQVLAHISGKIRKNYIKIMLEDRVLVELPPYDLTRGRIVFRYRN</sequence>
<gene>
    <name evidence="1" type="primary">infA2</name>
    <name type="ordered locus">SAV_504</name>
</gene>
<reference key="1">
    <citation type="journal article" date="2001" name="Proc. Natl. Acad. Sci. U.S.A.">
        <title>Genome sequence of an industrial microorganism Streptomyces avermitilis: deducing the ability of producing secondary metabolites.</title>
        <authorList>
            <person name="Omura S."/>
            <person name="Ikeda H."/>
            <person name="Ishikawa J."/>
            <person name="Hanamoto A."/>
            <person name="Takahashi C."/>
            <person name="Shinose M."/>
            <person name="Takahashi Y."/>
            <person name="Horikawa H."/>
            <person name="Nakazawa H."/>
            <person name="Osonoe T."/>
            <person name="Kikuchi H."/>
            <person name="Shiba T."/>
            <person name="Sakaki Y."/>
            <person name="Hattori M."/>
        </authorList>
    </citation>
    <scope>NUCLEOTIDE SEQUENCE [LARGE SCALE GENOMIC DNA]</scope>
    <source>
        <strain>ATCC 31267 / DSM 46492 / JCM 5070 / NBRC 14893 / NCIMB 12804 / NRRL 8165 / MA-4680</strain>
    </source>
</reference>
<reference key="2">
    <citation type="journal article" date="2003" name="Nat. Biotechnol.">
        <title>Complete genome sequence and comparative analysis of the industrial microorganism Streptomyces avermitilis.</title>
        <authorList>
            <person name="Ikeda H."/>
            <person name="Ishikawa J."/>
            <person name="Hanamoto A."/>
            <person name="Shinose M."/>
            <person name="Kikuchi H."/>
            <person name="Shiba T."/>
            <person name="Sakaki Y."/>
            <person name="Hattori M."/>
            <person name="Omura S."/>
        </authorList>
    </citation>
    <scope>NUCLEOTIDE SEQUENCE [LARGE SCALE GENOMIC DNA]</scope>
    <source>
        <strain>ATCC 31267 / DSM 46492 / JCM 5070 / NBRC 14893 / NCIMB 12804 / NRRL 8165 / MA-4680</strain>
    </source>
</reference>
<keyword id="KW-0963">Cytoplasm</keyword>
<keyword id="KW-0396">Initiation factor</keyword>
<keyword id="KW-0648">Protein biosynthesis</keyword>
<keyword id="KW-1185">Reference proteome</keyword>
<keyword id="KW-0694">RNA-binding</keyword>
<keyword id="KW-0699">rRNA-binding</keyword>
<accession>Q82QK2</accession>